<evidence type="ECO:0000255" key="1">
    <source>
        <dbReference type="HAMAP-Rule" id="MF_00219"/>
    </source>
</evidence>
<dbReference type="EC" id="3.5.2.3" evidence="1"/>
<dbReference type="EMBL" id="CP000034">
    <property type="protein sequence ID" value="ABB62182.1"/>
    <property type="molecule type" value="Genomic_DNA"/>
</dbReference>
<dbReference type="RefSeq" id="WP_000126536.1">
    <property type="nucleotide sequence ID" value="NC_007606.1"/>
</dbReference>
<dbReference type="RefSeq" id="YP_403673.1">
    <property type="nucleotide sequence ID" value="NC_007606.1"/>
</dbReference>
<dbReference type="SMR" id="Q32ES3"/>
<dbReference type="STRING" id="300267.SDY_2091"/>
<dbReference type="EnsemblBacteria" id="ABB62182">
    <property type="protein sequence ID" value="ABB62182"/>
    <property type="gene ID" value="SDY_2091"/>
</dbReference>
<dbReference type="KEGG" id="sdy:SDY_2091"/>
<dbReference type="PATRIC" id="fig|300267.13.peg.2516"/>
<dbReference type="HOGENOM" id="CLU_041558_1_0_6"/>
<dbReference type="UniPathway" id="UPA00070">
    <property type="reaction ID" value="UER00117"/>
</dbReference>
<dbReference type="Proteomes" id="UP000002716">
    <property type="component" value="Chromosome"/>
</dbReference>
<dbReference type="GO" id="GO:0005829">
    <property type="term" value="C:cytosol"/>
    <property type="evidence" value="ECO:0007669"/>
    <property type="project" value="TreeGrafter"/>
</dbReference>
<dbReference type="GO" id="GO:0004151">
    <property type="term" value="F:dihydroorotase activity"/>
    <property type="evidence" value="ECO:0007669"/>
    <property type="project" value="UniProtKB-UniRule"/>
</dbReference>
<dbReference type="GO" id="GO:0008270">
    <property type="term" value="F:zinc ion binding"/>
    <property type="evidence" value="ECO:0007669"/>
    <property type="project" value="UniProtKB-UniRule"/>
</dbReference>
<dbReference type="GO" id="GO:0006207">
    <property type="term" value="P:'de novo' pyrimidine nucleobase biosynthetic process"/>
    <property type="evidence" value="ECO:0007669"/>
    <property type="project" value="TreeGrafter"/>
</dbReference>
<dbReference type="GO" id="GO:0044205">
    <property type="term" value="P:'de novo' UMP biosynthetic process"/>
    <property type="evidence" value="ECO:0007669"/>
    <property type="project" value="UniProtKB-UniRule"/>
</dbReference>
<dbReference type="CDD" id="cd01294">
    <property type="entry name" value="DHOase"/>
    <property type="match status" value="1"/>
</dbReference>
<dbReference type="FunFam" id="3.20.20.140:FF:000006">
    <property type="entry name" value="Dihydroorotase"/>
    <property type="match status" value="1"/>
</dbReference>
<dbReference type="Gene3D" id="3.20.20.140">
    <property type="entry name" value="Metal-dependent hydrolases"/>
    <property type="match status" value="1"/>
</dbReference>
<dbReference type="HAMAP" id="MF_00219">
    <property type="entry name" value="PyrC_classII"/>
    <property type="match status" value="1"/>
</dbReference>
<dbReference type="InterPro" id="IPR006680">
    <property type="entry name" value="Amidohydro-rel"/>
</dbReference>
<dbReference type="InterPro" id="IPR004721">
    <property type="entry name" value="DHOdimr"/>
</dbReference>
<dbReference type="InterPro" id="IPR002195">
    <property type="entry name" value="Dihydroorotase_CS"/>
</dbReference>
<dbReference type="InterPro" id="IPR032466">
    <property type="entry name" value="Metal_Hydrolase"/>
</dbReference>
<dbReference type="NCBIfam" id="TIGR00856">
    <property type="entry name" value="pyrC_dimer"/>
    <property type="match status" value="1"/>
</dbReference>
<dbReference type="PANTHER" id="PTHR43137">
    <property type="entry name" value="DIHYDROOROTASE"/>
    <property type="match status" value="1"/>
</dbReference>
<dbReference type="PANTHER" id="PTHR43137:SF1">
    <property type="entry name" value="DIHYDROOROTASE"/>
    <property type="match status" value="1"/>
</dbReference>
<dbReference type="Pfam" id="PF01979">
    <property type="entry name" value="Amidohydro_1"/>
    <property type="match status" value="1"/>
</dbReference>
<dbReference type="PIRSF" id="PIRSF001237">
    <property type="entry name" value="DHOdimr"/>
    <property type="match status" value="1"/>
</dbReference>
<dbReference type="SUPFAM" id="SSF51556">
    <property type="entry name" value="Metallo-dependent hydrolases"/>
    <property type="match status" value="1"/>
</dbReference>
<dbReference type="PROSITE" id="PS00482">
    <property type="entry name" value="DIHYDROOROTASE_1"/>
    <property type="match status" value="1"/>
</dbReference>
<dbReference type="PROSITE" id="PS00483">
    <property type="entry name" value="DIHYDROOROTASE_2"/>
    <property type="match status" value="1"/>
</dbReference>
<comment type="function">
    <text evidence="1">Catalyzes the reversible cyclization of carbamoyl aspartate to dihydroorotate.</text>
</comment>
<comment type="catalytic activity">
    <reaction evidence="1">
        <text>(S)-dihydroorotate + H2O = N-carbamoyl-L-aspartate + H(+)</text>
        <dbReference type="Rhea" id="RHEA:24296"/>
        <dbReference type="ChEBI" id="CHEBI:15377"/>
        <dbReference type="ChEBI" id="CHEBI:15378"/>
        <dbReference type="ChEBI" id="CHEBI:30864"/>
        <dbReference type="ChEBI" id="CHEBI:32814"/>
        <dbReference type="EC" id="3.5.2.3"/>
    </reaction>
</comment>
<comment type="cofactor">
    <cofactor evidence="1">
        <name>Zn(2+)</name>
        <dbReference type="ChEBI" id="CHEBI:29105"/>
    </cofactor>
    <text evidence="1">Binds 2 Zn(2+) ions per subunit.</text>
</comment>
<comment type="pathway">
    <text evidence="1">Pyrimidine metabolism; UMP biosynthesis via de novo pathway; (S)-dihydroorotate from bicarbonate: step 3/3.</text>
</comment>
<comment type="subunit">
    <text evidence="1">Homodimer.</text>
</comment>
<comment type="similarity">
    <text evidence="1">Belongs to the metallo-dependent hydrolases superfamily. DHOase family. Class II DHOase subfamily.</text>
</comment>
<name>PYRC_SHIDS</name>
<keyword id="KW-0378">Hydrolase</keyword>
<keyword id="KW-0479">Metal-binding</keyword>
<keyword id="KW-0665">Pyrimidine biosynthesis</keyword>
<keyword id="KW-1185">Reference proteome</keyword>
<keyword id="KW-0862">Zinc</keyword>
<feature type="chain" id="PRO_1000024060" description="Dihydroorotase">
    <location>
        <begin position="1"/>
        <end position="348"/>
    </location>
</feature>
<feature type="active site" evidence="1">
    <location>
        <position position="251"/>
    </location>
</feature>
<feature type="binding site" evidence="1">
    <location>
        <position position="17"/>
    </location>
    <ligand>
        <name>Zn(2+)</name>
        <dbReference type="ChEBI" id="CHEBI:29105"/>
        <label>1</label>
    </ligand>
</feature>
<feature type="binding site" evidence="1">
    <location>
        <begin position="19"/>
        <end position="21"/>
    </location>
    <ligand>
        <name>substrate</name>
    </ligand>
</feature>
<feature type="binding site" evidence="1">
    <location>
        <position position="19"/>
    </location>
    <ligand>
        <name>Zn(2+)</name>
        <dbReference type="ChEBI" id="CHEBI:29105"/>
        <label>1</label>
    </ligand>
</feature>
<feature type="binding site" evidence="1">
    <location>
        <position position="45"/>
    </location>
    <ligand>
        <name>substrate</name>
    </ligand>
</feature>
<feature type="binding site" description="via carbamate group" evidence="1">
    <location>
        <position position="103"/>
    </location>
    <ligand>
        <name>Zn(2+)</name>
        <dbReference type="ChEBI" id="CHEBI:29105"/>
        <label>1</label>
    </ligand>
</feature>
<feature type="binding site" description="via carbamate group" evidence="1">
    <location>
        <position position="103"/>
    </location>
    <ligand>
        <name>Zn(2+)</name>
        <dbReference type="ChEBI" id="CHEBI:29105"/>
        <label>2</label>
    </ligand>
</feature>
<feature type="binding site" evidence="1">
    <location>
        <position position="140"/>
    </location>
    <ligand>
        <name>substrate</name>
    </ligand>
</feature>
<feature type="binding site" evidence="1">
    <location>
        <position position="140"/>
    </location>
    <ligand>
        <name>Zn(2+)</name>
        <dbReference type="ChEBI" id="CHEBI:29105"/>
        <label>2</label>
    </ligand>
</feature>
<feature type="binding site" evidence="1">
    <location>
        <position position="178"/>
    </location>
    <ligand>
        <name>Zn(2+)</name>
        <dbReference type="ChEBI" id="CHEBI:29105"/>
        <label>2</label>
    </ligand>
</feature>
<feature type="binding site" evidence="1">
    <location>
        <position position="223"/>
    </location>
    <ligand>
        <name>substrate</name>
    </ligand>
</feature>
<feature type="binding site" evidence="1">
    <location>
        <position position="251"/>
    </location>
    <ligand>
        <name>Zn(2+)</name>
        <dbReference type="ChEBI" id="CHEBI:29105"/>
        <label>1</label>
    </ligand>
</feature>
<feature type="binding site" evidence="1">
    <location>
        <position position="255"/>
    </location>
    <ligand>
        <name>substrate</name>
    </ligand>
</feature>
<feature type="binding site" evidence="1">
    <location>
        <position position="267"/>
    </location>
    <ligand>
        <name>substrate</name>
    </ligand>
</feature>
<feature type="modified residue" description="N6-carboxylysine" evidence="1">
    <location>
        <position position="103"/>
    </location>
</feature>
<proteinExistence type="inferred from homology"/>
<gene>
    <name evidence="1" type="primary">pyrC</name>
    <name type="ordered locus">SDY_2091</name>
</gene>
<organism>
    <name type="scientific">Shigella dysenteriae serotype 1 (strain Sd197)</name>
    <dbReference type="NCBI Taxonomy" id="300267"/>
    <lineage>
        <taxon>Bacteria</taxon>
        <taxon>Pseudomonadati</taxon>
        <taxon>Pseudomonadota</taxon>
        <taxon>Gammaproteobacteria</taxon>
        <taxon>Enterobacterales</taxon>
        <taxon>Enterobacteriaceae</taxon>
        <taxon>Shigella</taxon>
    </lineage>
</organism>
<accession>Q32ES3</accession>
<reference key="1">
    <citation type="journal article" date="2005" name="Nucleic Acids Res.">
        <title>Genome dynamics and diversity of Shigella species, the etiologic agents of bacillary dysentery.</title>
        <authorList>
            <person name="Yang F."/>
            <person name="Yang J."/>
            <person name="Zhang X."/>
            <person name="Chen L."/>
            <person name="Jiang Y."/>
            <person name="Yan Y."/>
            <person name="Tang X."/>
            <person name="Wang J."/>
            <person name="Xiong Z."/>
            <person name="Dong J."/>
            <person name="Xue Y."/>
            <person name="Zhu Y."/>
            <person name="Xu X."/>
            <person name="Sun L."/>
            <person name="Chen S."/>
            <person name="Nie H."/>
            <person name="Peng J."/>
            <person name="Xu J."/>
            <person name="Wang Y."/>
            <person name="Yuan Z."/>
            <person name="Wen Y."/>
            <person name="Yao Z."/>
            <person name="Shen Y."/>
            <person name="Qiang B."/>
            <person name="Hou Y."/>
            <person name="Yu J."/>
            <person name="Jin Q."/>
        </authorList>
    </citation>
    <scope>NUCLEOTIDE SEQUENCE [LARGE SCALE GENOMIC DNA]</scope>
    <source>
        <strain>Sd197</strain>
    </source>
</reference>
<protein>
    <recommendedName>
        <fullName evidence="1">Dihydroorotase</fullName>
        <shortName evidence="1">DHOase</shortName>
        <ecNumber evidence="1">3.5.2.3</ecNumber>
    </recommendedName>
</protein>
<sequence length="348" mass="38800">MTAPSQVLKIRRPDDWHLHLRDGDMLKTVVPYTSEIYGRAIVMPNLAPPVTTVEAAVAYRQRILDAVPAGHDFTPLMTCYLTDSLDPNELERGFNEGVFTAAKLYPANATTNSSHGVTSIDAIMPVLERMEKIGMPLLVHGEVTHADIDIFDREARFIESVMEPLRQRLTALKVVFEHITTKDAADYVRDGNERLAATITPQHLMFNRNHMLVGGVRPHLYCLPILKRNIHQQALRELVASGFNRVFLGTDSAPHARHRKESSCGCAGCFSAPTALGSYATVFEEMNALQHFEAFCSVNGPQFYGLPVNDTFIELVREEQQVAESIALTDDTLVPFLAGETVRWSVKQ</sequence>